<gene>
    <name evidence="1" type="primary">glpK</name>
    <name type="ordered locus">VC_A0744</name>
</gene>
<sequence>MTEQKYVVALDQGTTSSRAVVLDHDANIVSVSQREFTQIYPQAGWVEHDPMEIYATQSSTLVEALGKAGIRSDEVAAIGITNQRETTVVWNKETGKPVYNAIVWQCRRTAAICEELKERGLESYIRDNTGLVLDPYFSGTKIKWILDNVEGAREQAEAGQLLFGTVDTWLVWKMTQGRVHVTDYTNASRTMLFNINTLQWDEKILAEFNIPLSMMPEVKKSSEVYGQTNIGGKGGTRIPIAGIAGDQQAALYGQMCVQAGQAKNTYGTGCFLLMNTGQEKVTSHNGLLTTLACGPRGEPAYALEGAVFMGGASIQWLRDELKLISDARDSEYFATKVDTSNGVYVVPAFTGLGAPYWDAYARGTIVGLTRGVNSNHIIRATLESIAYQTRDVLDAMQADSGIKLSALRVDGGAVANNFLMQFQADVLDTEVHRPKVTEVTALGAAYLAGLAVGFWDGLEELQGKAEIDRSFKPHHDEEKRQRRYKGWKRAVKCAQAWAVLHNEEE</sequence>
<reference key="1">
    <citation type="journal article" date="2000" name="Nature">
        <title>DNA sequence of both chromosomes of the cholera pathogen Vibrio cholerae.</title>
        <authorList>
            <person name="Heidelberg J.F."/>
            <person name="Eisen J.A."/>
            <person name="Nelson W.C."/>
            <person name="Clayton R.A."/>
            <person name="Gwinn M.L."/>
            <person name="Dodson R.J."/>
            <person name="Haft D.H."/>
            <person name="Hickey E.K."/>
            <person name="Peterson J.D."/>
            <person name="Umayam L.A."/>
            <person name="Gill S.R."/>
            <person name="Nelson K.E."/>
            <person name="Read T.D."/>
            <person name="Tettelin H."/>
            <person name="Richardson D.L."/>
            <person name="Ermolaeva M.D."/>
            <person name="Vamathevan J.J."/>
            <person name="Bass S."/>
            <person name="Qin H."/>
            <person name="Dragoi I."/>
            <person name="Sellers P."/>
            <person name="McDonald L.A."/>
            <person name="Utterback T.R."/>
            <person name="Fleischmann R.D."/>
            <person name="Nierman W.C."/>
            <person name="White O."/>
            <person name="Salzberg S.L."/>
            <person name="Smith H.O."/>
            <person name="Colwell R.R."/>
            <person name="Mekalanos J.J."/>
            <person name="Venter J.C."/>
            <person name="Fraser C.M."/>
        </authorList>
    </citation>
    <scope>NUCLEOTIDE SEQUENCE [LARGE SCALE GENOMIC DNA]</scope>
    <source>
        <strain>ATCC 39315 / El Tor Inaba N16961</strain>
    </source>
</reference>
<dbReference type="EC" id="2.7.1.30" evidence="1"/>
<dbReference type="EMBL" id="AE003853">
    <property type="protein sequence ID" value="AAF96643.1"/>
    <property type="molecule type" value="Genomic_DNA"/>
</dbReference>
<dbReference type="PIR" id="C82422">
    <property type="entry name" value="C82422"/>
</dbReference>
<dbReference type="RefSeq" id="NP_233131.1">
    <property type="nucleotide sequence ID" value="NC_002506.1"/>
</dbReference>
<dbReference type="RefSeq" id="WP_000139398.1">
    <property type="nucleotide sequence ID" value="NZ_LT906615.1"/>
</dbReference>
<dbReference type="SMR" id="Q9KLJ9"/>
<dbReference type="STRING" id="243277.VC_A0744"/>
<dbReference type="DNASU" id="2611914"/>
<dbReference type="EnsemblBacteria" id="AAF96643">
    <property type="protein sequence ID" value="AAF96643"/>
    <property type="gene ID" value="VC_A0744"/>
</dbReference>
<dbReference type="GeneID" id="69721446"/>
<dbReference type="KEGG" id="vch:VC_A0744"/>
<dbReference type="PATRIC" id="fig|243277.26.peg.3370"/>
<dbReference type="eggNOG" id="COG0554">
    <property type="taxonomic scope" value="Bacteria"/>
</dbReference>
<dbReference type="HOGENOM" id="CLU_009281_2_3_6"/>
<dbReference type="UniPathway" id="UPA00618">
    <property type="reaction ID" value="UER00672"/>
</dbReference>
<dbReference type="Proteomes" id="UP000000584">
    <property type="component" value="Chromosome 2"/>
</dbReference>
<dbReference type="GO" id="GO:0005829">
    <property type="term" value="C:cytosol"/>
    <property type="evidence" value="ECO:0000318"/>
    <property type="project" value="GO_Central"/>
</dbReference>
<dbReference type="GO" id="GO:0005524">
    <property type="term" value="F:ATP binding"/>
    <property type="evidence" value="ECO:0007669"/>
    <property type="project" value="UniProtKB-UniRule"/>
</dbReference>
<dbReference type="GO" id="GO:0004370">
    <property type="term" value="F:glycerol kinase activity"/>
    <property type="evidence" value="ECO:0000250"/>
    <property type="project" value="UniProtKB"/>
</dbReference>
<dbReference type="GO" id="GO:0019563">
    <property type="term" value="P:glycerol catabolic process"/>
    <property type="evidence" value="ECO:0000318"/>
    <property type="project" value="GO_Central"/>
</dbReference>
<dbReference type="GO" id="GO:0006071">
    <property type="term" value="P:glycerol metabolic process"/>
    <property type="evidence" value="ECO:0000250"/>
    <property type="project" value="UniProtKB"/>
</dbReference>
<dbReference type="GO" id="GO:0006072">
    <property type="term" value="P:glycerol-3-phosphate metabolic process"/>
    <property type="evidence" value="ECO:0007669"/>
    <property type="project" value="InterPro"/>
</dbReference>
<dbReference type="CDD" id="cd07769">
    <property type="entry name" value="ASKHA_NBD_FGGY_GK"/>
    <property type="match status" value="1"/>
</dbReference>
<dbReference type="FunFam" id="3.30.420.40:FF:000007">
    <property type="entry name" value="Glycerol kinase"/>
    <property type="match status" value="1"/>
</dbReference>
<dbReference type="FunFam" id="3.30.420.40:FF:000008">
    <property type="entry name" value="Glycerol kinase"/>
    <property type="match status" value="1"/>
</dbReference>
<dbReference type="Gene3D" id="3.30.420.40">
    <property type="match status" value="2"/>
</dbReference>
<dbReference type="HAMAP" id="MF_00186">
    <property type="entry name" value="Glycerol_kin"/>
    <property type="match status" value="1"/>
</dbReference>
<dbReference type="InterPro" id="IPR043129">
    <property type="entry name" value="ATPase_NBD"/>
</dbReference>
<dbReference type="InterPro" id="IPR000577">
    <property type="entry name" value="Carb_kinase_FGGY"/>
</dbReference>
<dbReference type="InterPro" id="IPR018483">
    <property type="entry name" value="Carb_kinase_FGGY_CS"/>
</dbReference>
<dbReference type="InterPro" id="IPR018485">
    <property type="entry name" value="FGGY_C"/>
</dbReference>
<dbReference type="InterPro" id="IPR018484">
    <property type="entry name" value="FGGY_N"/>
</dbReference>
<dbReference type="InterPro" id="IPR005999">
    <property type="entry name" value="Glycerol_kin"/>
</dbReference>
<dbReference type="NCBIfam" id="TIGR01311">
    <property type="entry name" value="glycerol_kin"/>
    <property type="match status" value="1"/>
</dbReference>
<dbReference type="NCBIfam" id="NF000756">
    <property type="entry name" value="PRK00047.1"/>
    <property type="match status" value="1"/>
</dbReference>
<dbReference type="PANTHER" id="PTHR10196:SF69">
    <property type="entry name" value="GLYCEROL KINASE"/>
    <property type="match status" value="1"/>
</dbReference>
<dbReference type="PANTHER" id="PTHR10196">
    <property type="entry name" value="SUGAR KINASE"/>
    <property type="match status" value="1"/>
</dbReference>
<dbReference type="Pfam" id="PF02782">
    <property type="entry name" value="FGGY_C"/>
    <property type="match status" value="1"/>
</dbReference>
<dbReference type="Pfam" id="PF00370">
    <property type="entry name" value="FGGY_N"/>
    <property type="match status" value="1"/>
</dbReference>
<dbReference type="PIRSF" id="PIRSF000538">
    <property type="entry name" value="GlpK"/>
    <property type="match status" value="1"/>
</dbReference>
<dbReference type="SUPFAM" id="SSF53067">
    <property type="entry name" value="Actin-like ATPase domain"/>
    <property type="match status" value="2"/>
</dbReference>
<dbReference type="PROSITE" id="PS00933">
    <property type="entry name" value="FGGY_KINASES_1"/>
    <property type="match status" value="1"/>
</dbReference>
<dbReference type="PROSITE" id="PS00445">
    <property type="entry name" value="FGGY_KINASES_2"/>
    <property type="match status" value="1"/>
</dbReference>
<keyword id="KW-0067">ATP-binding</keyword>
<keyword id="KW-0319">Glycerol metabolism</keyword>
<keyword id="KW-0418">Kinase</keyword>
<keyword id="KW-0547">Nucleotide-binding</keyword>
<keyword id="KW-1185">Reference proteome</keyword>
<keyword id="KW-0808">Transferase</keyword>
<comment type="function">
    <text evidence="1">Key enzyme in the regulation of glycerol uptake and metabolism. Catalyzes the phosphorylation of glycerol to yield sn-glycerol 3-phosphate.</text>
</comment>
<comment type="catalytic activity">
    <reaction evidence="1">
        <text>glycerol + ATP = sn-glycerol 3-phosphate + ADP + H(+)</text>
        <dbReference type="Rhea" id="RHEA:21644"/>
        <dbReference type="ChEBI" id="CHEBI:15378"/>
        <dbReference type="ChEBI" id="CHEBI:17754"/>
        <dbReference type="ChEBI" id="CHEBI:30616"/>
        <dbReference type="ChEBI" id="CHEBI:57597"/>
        <dbReference type="ChEBI" id="CHEBI:456216"/>
        <dbReference type="EC" id="2.7.1.30"/>
    </reaction>
</comment>
<comment type="activity regulation">
    <text evidence="1">Inhibited by fructose 1,6-bisphosphate (FBP).</text>
</comment>
<comment type="pathway">
    <text evidence="1">Polyol metabolism; glycerol degradation via glycerol kinase pathway; sn-glycerol 3-phosphate from glycerol: step 1/1.</text>
</comment>
<comment type="similarity">
    <text evidence="1">Belongs to the FGGY kinase family.</text>
</comment>
<organism>
    <name type="scientific">Vibrio cholerae serotype O1 (strain ATCC 39315 / El Tor Inaba N16961)</name>
    <dbReference type="NCBI Taxonomy" id="243277"/>
    <lineage>
        <taxon>Bacteria</taxon>
        <taxon>Pseudomonadati</taxon>
        <taxon>Pseudomonadota</taxon>
        <taxon>Gammaproteobacteria</taxon>
        <taxon>Vibrionales</taxon>
        <taxon>Vibrionaceae</taxon>
        <taxon>Vibrio</taxon>
    </lineage>
</organism>
<protein>
    <recommendedName>
        <fullName evidence="1">Glycerol kinase</fullName>
        <ecNumber evidence="1">2.7.1.30</ecNumber>
    </recommendedName>
    <alternativeName>
        <fullName evidence="1">ATP:glycerol 3-phosphotransferase</fullName>
    </alternativeName>
    <alternativeName>
        <fullName evidence="1">Glycerokinase</fullName>
        <shortName evidence="1">GK</shortName>
    </alternativeName>
</protein>
<feature type="chain" id="PRO_0000059518" description="Glycerol kinase">
    <location>
        <begin position="1"/>
        <end position="505"/>
    </location>
</feature>
<feature type="binding site" evidence="1">
    <location>
        <position position="14"/>
    </location>
    <ligand>
        <name>ADP</name>
        <dbReference type="ChEBI" id="CHEBI:456216"/>
    </ligand>
</feature>
<feature type="binding site" evidence="1">
    <location>
        <position position="14"/>
    </location>
    <ligand>
        <name>ATP</name>
        <dbReference type="ChEBI" id="CHEBI:30616"/>
    </ligand>
</feature>
<feature type="binding site" evidence="1">
    <location>
        <position position="14"/>
    </location>
    <ligand>
        <name>sn-glycerol 3-phosphate</name>
        <dbReference type="ChEBI" id="CHEBI:57597"/>
    </ligand>
</feature>
<feature type="binding site" evidence="1">
    <location>
        <position position="15"/>
    </location>
    <ligand>
        <name>ATP</name>
        <dbReference type="ChEBI" id="CHEBI:30616"/>
    </ligand>
</feature>
<feature type="binding site" evidence="1">
    <location>
        <position position="16"/>
    </location>
    <ligand>
        <name>ATP</name>
        <dbReference type="ChEBI" id="CHEBI:30616"/>
    </ligand>
</feature>
<feature type="binding site" evidence="1">
    <location>
        <position position="18"/>
    </location>
    <ligand>
        <name>ADP</name>
        <dbReference type="ChEBI" id="CHEBI:456216"/>
    </ligand>
</feature>
<feature type="binding site" evidence="1">
    <location>
        <position position="84"/>
    </location>
    <ligand>
        <name>glycerol</name>
        <dbReference type="ChEBI" id="CHEBI:17754"/>
    </ligand>
</feature>
<feature type="binding site" evidence="1">
    <location>
        <position position="84"/>
    </location>
    <ligand>
        <name>sn-glycerol 3-phosphate</name>
        <dbReference type="ChEBI" id="CHEBI:57597"/>
    </ligand>
</feature>
<feature type="binding site" evidence="1">
    <location>
        <position position="85"/>
    </location>
    <ligand>
        <name>glycerol</name>
        <dbReference type="ChEBI" id="CHEBI:17754"/>
    </ligand>
</feature>
<feature type="binding site" evidence="1">
    <location>
        <position position="85"/>
    </location>
    <ligand>
        <name>sn-glycerol 3-phosphate</name>
        <dbReference type="ChEBI" id="CHEBI:57597"/>
    </ligand>
</feature>
<feature type="binding site" evidence="1">
    <location>
        <position position="136"/>
    </location>
    <ligand>
        <name>glycerol</name>
        <dbReference type="ChEBI" id="CHEBI:17754"/>
    </ligand>
</feature>
<feature type="binding site" evidence="1">
    <location>
        <position position="136"/>
    </location>
    <ligand>
        <name>sn-glycerol 3-phosphate</name>
        <dbReference type="ChEBI" id="CHEBI:57597"/>
    </ligand>
</feature>
<feature type="binding site" evidence="1">
    <location>
        <position position="246"/>
    </location>
    <ligand>
        <name>glycerol</name>
        <dbReference type="ChEBI" id="CHEBI:17754"/>
    </ligand>
</feature>
<feature type="binding site" evidence="1">
    <location>
        <position position="246"/>
    </location>
    <ligand>
        <name>sn-glycerol 3-phosphate</name>
        <dbReference type="ChEBI" id="CHEBI:57597"/>
    </ligand>
</feature>
<feature type="binding site" evidence="1">
    <location>
        <position position="247"/>
    </location>
    <ligand>
        <name>glycerol</name>
        <dbReference type="ChEBI" id="CHEBI:17754"/>
    </ligand>
</feature>
<feature type="binding site" evidence="1">
    <location>
        <position position="268"/>
    </location>
    <ligand>
        <name>ADP</name>
        <dbReference type="ChEBI" id="CHEBI:456216"/>
    </ligand>
</feature>
<feature type="binding site" evidence="1">
    <location>
        <position position="268"/>
    </location>
    <ligand>
        <name>ATP</name>
        <dbReference type="ChEBI" id="CHEBI:30616"/>
    </ligand>
</feature>
<feature type="binding site" evidence="1">
    <location>
        <position position="311"/>
    </location>
    <ligand>
        <name>ADP</name>
        <dbReference type="ChEBI" id="CHEBI:456216"/>
    </ligand>
</feature>
<feature type="binding site" evidence="1">
    <location>
        <position position="311"/>
    </location>
    <ligand>
        <name>ATP</name>
        <dbReference type="ChEBI" id="CHEBI:30616"/>
    </ligand>
</feature>
<feature type="binding site" evidence="1">
    <location>
        <position position="315"/>
    </location>
    <ligand>
        <name>ATP</name>
        <dbReference type="ChEBI" id="CHEBI:30616"/>
    </ligand>
</feature>
<feature type="binding site" evidence="1">
    <location>
        <position position="412"/>
    </location>
    <ligand>
        <name>ADP</name>
        <dbReference type="ChEBI" id="CHEBI:456216"/>
    </ligand>
</feature>
<feature type="binding site" evidence="1">
    <location>
        <position position="412"/>
    </location>
    <ligand>
        <name>ATP</name>
        <dbReference type="ChEBI" id="CHEBI:30616"/>
    </ligand>
</feature>
<feature type="binding site" evidence="1">
    <location>
        <position position="416"/>
    </location>
    <ligand>
        <name>ADP</name>
        <dbReference type="ChEBI" id="CHEBI:456216"/>
    </ligand>
</feature>
<evidence type="ECO:0000255" key="1">
    <source>
        <dbReference type="HAMAP-Rule" id="MF_00186"/>
    </source>
</evidence>
<proteinExistence type="inferred from homology"/>
<accession>Q9KLJ9</accession>
<name>GLPK_VIBCH</name>